<feature type="chain" id="PRO_0000402685" description="Ureidoacrylate amidohydrolase RutB">
    <location>
        <begin position="1"/>
        <end position="230"/>
    </location>
</feature>
<feature type="active site" description="Proton acceptor" evidence="1">
    <location>
        <position position="24"/>
    </location>
</feature>
<feature type="active site" evidence="1">
    <location>
        <position position="133"/>
    </location>
</feature>
<feature type="active site" description="Nucleophile" evidence="1">
    <location>
        <position position="166"/>
    </location>
</feature>
<dbReference type="EC" id="3.5.1.110" evidence="1"/>
<dbReference type="EMBL" id="CU928162">
    <property type="protein sequence ID" value="CAR07368.1"/>
    <property type="molecule type" value="Genomic_DNA"/>
</dbReference>
<dbReference type="RefSeq" id="WP_001317756.1">
    <property type="nucleotide sequence ID" value="NC_011745.1"/>
</dbReference>
<dbReference type="SMR" id="B7MTF4"/>
<dbReference type="KEGG" id="ecq:ECED1_1167"/>
<dbReference type="HOGENOM" id="CLU_068979_8_0_6"/>
<dbReference type="Proteomes" id="UP000000748">
    <property type="component" value="Chromosome"/>
</dbReference>
<dbReference type="GO" id="GO:0016811">
    <property type="term" value="F:hydrolase activity, acting on carbon-nitrogen (but not peptide) bonds, in linear amides"/>
    <property type="evidence" value="ECO:0007669"/>
    <property type="project" value="UniProtKB-UniRule"/>
</dbReference>
<dbReference type="GO" id="GO:0019740">
    <property type="term" value="P:nitrogen utilization"/>
    <property type="evidence" value="ECO:0007669"/>
    <property type="project" value="UniProtKB-UniRule"/>
</dbReference>
<dbReference type="GO" id="GO:0006212">
    <property type="term" value="P:uracil catabolic process"/>
    <property type="evidence" value="ECO:0007669"/>
    <property type="project" value="UniProtKB-UniRule"/>
</dbReference>
<dbReference type="CDD" id="cd00431">
    <property type="entry name" value="cysteine_hydrolases"/>
    <property type="match status" value="1"/>
</dbReference>
<dbReference type="FunFam" id="3.40.50.850:FF:000004">
    <property type="entry name" value="Peroxyureidoacrylate/ureidoacrylate amidohydrolase RutB"/>
    <property type="match status" value="1"/>
</dbReference>
<dbReference type="Gene3D" id="3.40.50.850">
    <property type="entry name" value="Isochorismatase-like"/>
    <property type="match status" value="1"/>
</dbReference>
<dbReference type="HAMAP" id="MF_00830">
    <property type="entry name" value="RutB"/>
    <property type="match status" value="1"/>
</dbReference>
<dbReference type="InterPro" id="IPR000868">
    <property type="entry name" value="Isochorismatase-like_dom"/>
</dbReference>
<dbReference type="InterPro" id="IPR050272">
    <property type="entry name" value="Isochorismatase-like_hydrls"/>
</dbReference>
<dbReference type="InterPro" id="IPR036380">
    <property type="entry name" value="Isochorismatase-like_sf"/>
</dbReference>
<dbReference type="InterPro" id="IPR019916">
    <property type="entry name" value="RutB"/>
</dbReference>
<dbReference type="NCBIfam" id="TIGR03614">
    <property type="entry name" value="RutB"/>
    <property type="match status" value="1"/>
</dbReference>
<dbReference type="PANTHER" id="PTHR43540:SF6">
    <property type="entry name" value="ISOCHORISMATASE-LIKE DOMAIN-CONTAINING PROTEIN"/>
    <property type="match status" value="1"/>
</dbReference>
<dbReference type="PANTHER" id="PTHR43540">
    <property type="entry name" value="PEROXYUREIDOACRYLATE/UREIDOACRYLATE AMIDOHYDROLASE-RELATED"/>
    <property type="match status" value="1"/>
</dbReference>
<dbReference type="Pfam" id="PF00857">
    <property type="entry name" value="Isochorismatase"/>
    <property type="match status" value="1"/>
</dbReference>
<dbReference type="SUPFAM" id="SSF52499">
    <property type="entry name" value="Isochorismatase-like hydrolases"/>
    <property type="match status" value="1"/>
</dbReference>
<reference key="1">
    <citation type="journal article" date="2009" name="PLoS Genet.">
        <title>Organised genome dynamics in the Escherichia coli species results in highly diverse adaptive paths.</title>
        <authorList>
            <person name="Touchon M."/>
            <person name="Hoede C."/>
            <person name="Tenaillon O."/>
            <person name="Barbe V."/>
            <person name="Baeriswyl S."/>
            <person name="Bidet P."/>
            <person name="Bingen E."/>
            <person name="Bonacorsi S."/>
            <person name="Bouchier C."/>
            <person name="Bouvet O."/>
            <person name="Calteau A."/>
            <person name="Chiapello H."/>
            <person name="Clermont O."/>
            <person name="Cruveiller S."/>
            <person name="Danchin A."/>
            <person name="Diard M."/>
            <person name="Dossat C."/>
            <person name="Karoui M.E."/>
            <person name="Frapy E."/>
            <person name="Garry L."/>
            <person name="Ghigo J.M."/>
            <person name="Gilles A.M."/>
            <person name="Johnson J."/>
            <person name="Le Bouguenec C."/>
            <person name="Lescat M."/>
            <person name="Mangenot S."/>
            <person name="Martinez-Jehanne V."/>
            <person name="Matic I."/>
            <person name="Nassif X."/>
            <person name="Oztas S."/>
            <person name="Petit M.A."/>
            <person name="Pichon C."/>
            <person name="Rouy Z."/>
            <person name="Ruf C.S."/>
            <person name="Schneider D."/>
            <person name="Tourret J."/>
            <person name="Vacherie B."/>
            <person name="Vallenet D."/>
            <person name="Medigue C."/>
            <person name="Rocha E.P.C."/>
            <person name="Denamur E."/>
        </authorList>
    </citation>
    <scope>NUCLEOTIDE SEQUENCE [LARGE SCALE GENOMIC DNA]</scope>
    <source>
        <strain>ED1a</strain>
    </source>
</reference>
<gene>
    <name evidence="1" type="primary">rutB</name>
    <name type="ordered locus">ECED1_1167</name>
</gene>
<evidence type="ECO:0000255" key="1">
    <source>
        <dbReference type="HAMAP-Rule" id="MF_00830"/>
    </source>
</evidence>
<protein>
    <recommendedName>
        <fullName evidence="1">Ureidoacrylate amidohydrolase RutB</fullName>
        <ecNumber evidence="1">3.5.1.110</ecNumber>
    </recommendedName>
</protein>
<keyword id="KW-0378">Hydrolase</keyword>
<comment type="function">
    <text evidence="1">Hydrolyzes ureidoacrylate to form aminoacrylate and carbamate. The carbamate hydrolyzes spontaneously, thereby releasing one of the nitrogen atoms of the pyrimidine ring as ammonia and one of its carbon atoms as CO2.</text>
</comment>
<comment type="catalytic activity">
    <reaction evidence="1">
        <text>(Z)-3-ureidoacrylate + H2O + H(+) = (Z)-3-aminoacrylate + NH4(+) + CO2</text>
        <dbReference type="Rhea" id="RHEA:42624"/>
        <dbReference type="ChEBI" id="CHEBI:15377"/>
        <dbReference type="ChEBI" id="CHEBI:15378"/>
        <dbReference type="ChEBI" id="CHEBI:16526"/>
        <dbReference type="ChEBI" id="CHEBI:28938"/>
        <dbReference type="ChEBI" id="CHEBI:59891"/>
        <dbReference type="ChEBI" id="CHEBI:59894"/>
        <dbReference type="EC" id="3.5.1.110"/>
    </reaction>
</comment>
<comment type="catalytic activity">
    <reaction evidence="1">
        <text>(Z)-3-ureidoacrylate + H2O = (Z)-3-aminoacrylate + carbamate + H(+)</text>
        <dbReference type="Rhea" id="RHEA:31603"/>
        <dbReference type="ChEBI" id="CHEBI:13941"/>
        <dbReference type="ChEBI" id="CHEBI:15377"/>
        <dbReference type="ChEBI" id="CHEBI:15378"/>
        <dbReference type="ChEBI" id="CHEBI:59891"/>
        <dbReference type="ChEBI" id="CHEBI:59894"/>
    </reaction>
</comment>
<comment type="catalytic activity">
    <reaction evidence="1">
        <text>(Z)-2-methylureidoacrylate + H2O + H(+) = (Z)-2-methylaminoacrylate + NH4(+) + CO2</text>
        <dbReference type="Rhea" id="RHEA:42620"/>
        <dbReference type="ChEBI" id="CHEBI:15377"/>
        <dbReference type="ChEBI" id="CHEBI:15378"/>
        <dbReference type="ChEBI" id="CHEBI:16526"/>
        <dbReference type="ChEBI" id="CHEBI:28938"/>
        <dbReference type="ChEBI" id="CHEBI:143783"/>
        <dbReference type="ChEBI" id="CHEBI:145735"/>
        <dbReference type="EC" id="3.5.1.110"/>
    </reaction>
</comment>
<comment type="induction">
    <text evidence="1">Up-regulated by the nitrogen regulatory protein C (NtrC also called GlnG) and repressed by RutR.</text>
</comment>
<comment type="similarity">
    <text evidence="1">Belongs to the isochorismatase family. RutB subfamily.</text>
</comment>
<organism>
    <name type="scientific">Escherichia coli O81 (strain ED1a)</name>
    <dbReference type="NCBI Taxonomy" id="585397"/>
    <lineage>
        <taxon>Bacteria</taxon>
        <taxon>Pseudomonadati</taxon>
        <taxon>Pseudomonadota</taxon>
        <taxon>Gammaproteobacteria</taxon>
        <taxon>Enterobacterales</taxon>
        <taxon>Enterobacteriaceae</taxon>
        <taxon>Escherichia</taxon>
    </lineage>
</organism>
<accession>B7MTF4</accession>
<sequence>MTTLTARPEAITFDPQQTALIVVDMQNAYATPGGYLDLAGFDVSTTRPVIANIQTAVTAARAAGMLIIWFQNGWDEQYVEAGGPGSPNFHKSNALKTMRKQPQLQGKLLAKGSWDYQLVDELVPQPGDIVLPKPRYSGFFNTPLDSILRSRGIRHLVFTGIATNVCVESTLRDGFFLEYFGVVLEDATHQAGPEFAQKAALFNIETFFGWVSDVETFCDALSSTSFARIA</sequence>
<proteinExistence type="inferred from homology"/>
<name>RUTB_ECO81</name>